<dbReference type="EMBL" id="M77351">
    <property type="protein sequence ID" value="AAA26935.1"/>
    <property type="molecule type" value="Genomic_DNA"/>
</dbReference>
<dbReference type="EMBL" id="AE014133">
    <property type="protein sequence ID" value="AAN58594.1"/>
    <property type="molecule type" value="Genomic_DNA"/>
</dbReference>
<dbReference type="PIR" id="C42400">
    <property type="entry name" value="C42400"/>
</dbReference>
<dbReference type="RefSeq" id="NP_721288.1">
    <property type="nucleotide sequence ID" value="NC_004350.2"/>
</dbReference>
<dbReference type="RefSeq" id="WP_002262873.1">
    <property type="nucleotide sequence ID" value="NC_004350.2"/>
</dbReference>
<dbReference type="SMR" id="Q00750"/>
<dbReference type="STRING" id="210007.SMU_879"/>
<dbReference type="TCDB" id="3.A.1.1.28">
    <property type="family name" value="the atp-binding cassette (abc) superfamily"/>
</dbReference>
<dbReference type="KEGG" id="smu:SMU_879"/>
<dbReference type="PATRIC" id="fig|210007.7.peg.785"/>
<dbReference type="eggNOG" id="COG1175">
    <property type="taxonomic scope" value="Bacteria"/>
</dbReference>
<dbReference type="HOGENOM" id="CLU_016047_0_0_9"/>
<dbReference type="OrthoDB" id="5174895at2"/>
<dbReference type="PhylomeDB" id="Q00750"/>
<dbReference type="Proteomes" id="UP000002512">
    <property type="component" value="Chromosome"/>
</dbReference>
<dbReference type="GO" id="GO:0005886">
    <property type="term" value="C:plasma membrane"/>
    <property type="evidence" value="ECO:0007669"/>
    <property type="project" value="UniProtKB-SubCell"/>
</dbReference>
<dbReference type="GO" id="GO:0055085">
    <property type="term" value="P:transmembrane transport"/>
    <property type="evidence" value="ECO:0007669"/>
    <property type="project" value="InterPro"/>
</dbReference>
<dbReference type="CDD" id="cd06261">
    <property type="entry name" value="TM_PBP2"/>
    <property type="match status" value="1"/>
</dbReference>
<dbReference type="Gene3D" id="1.10.3720.10">
    <property type="entry name" value="MetI-like"/>
    <property type="match status" value="1"/>
</dbReference>
<dbReference type="InterPro" id="IPR051393">
    <property type="entry name" value="ABC_transporter_permease"/>
</dbReference>
<dbReference type="InterPro" id="IPR000515">
    <property type="entry name" value="MetI-like"/>
</dbReference>
<dbReference type="InterPro" id="IPR035906">
    <property type="entry name" value="MetI-like_sf"/>
</dbReference>
<dbReference type="PANTHER" id="PTHR30193">
    <property type="entry name" value="ABC TRANSPORTER PERMEASE PROTEIN"/>
    <property type="match status" value="1"/>
</dbReference>
<dbReference type="PANTHER" id="PTHR30193:SF37">
    <property type="entry name" value="INNER MEMBRANE ABC TRANSPORTER PERMEASE PROTEIN YCJO"/>
    <property type="match status" value="1"/>
</dbReference>
<dbReference type="Pfam" id="PF00528">
    <property type="entry name" value="BPD_transp_1"/>
    <property type="match status" value="1"/>
</dbReference>
<dbReference type="SUPFAM" id="SSF161098">
    <property type="entry name" value="MetI-like"/>
    <property type="match status" value="1"/>
</dbReference>
<dbReference type="PROSITE" id="PS50928">
    <property type="entry name" value="ABC_TM1"/>
    <property type="match status" value="1"/>
</dbReference>
<sequence>MTIRKVLNKYWGWTFLIVPLILQVVFFYFPMFQGAFYSFTNWTGLTYNFDFVGINNYKILMTDGKFMKAIGFTLVLTLALIVGEIVLGIIIARALNAKIKGKTFFRAWFFFPAVLSGLTVSLIFKQVFNYGLPAVGSALGIKFLETSMLGTANGAVIASIFVLLWQGVAMPIILFLSGLQSIPSEIVEAAAIDGADSKQTFWSVELPYLLPSISMVFIMALKAGLTAFDQIFALTGGGPNNSTTSLGLLVYNYAFKSNQYGYANAIALILFIIIGIVSVLQIKLSKKFEV</sequence>
<comment type="function">
    <text>Involved in a binding protein-dependent transport system responsible for the uptake of melibiose, raffinose and isomaltotriose.</text>
</comment>
<comment type="subcellular location">
    <subcellularLocation>
        <location evidence="2">Cell membrane</location>
        <topology evidence="1">Multi-pass membrane protein</topology>
    </subcellularLocation>
</comment>
<comment type="similarity">
    <text evidence="2">Belongs to the binding-protein-dependent transport system permease family. MalFG subfamily.</text>
</comment>
<feature type="chain" id="PRO_0000060117" description="Multiple sugar-binding transport system permease protein MsmF">
    <location>
        <begin position="1"/>
        <end position="290"/>
    </location>
</feature>
<feature type="transmembrane region" description="Helical" evidence="1">
    <location>
        <begin position="12"/>
        <end position="32"/>
    </location>
</feature>
<feature type="transmembrane region" description="Helical" evidence="1">
    <location>
        <begin position="72"/>
        <end position="92"/>
    </location>
</feature>
<feature type="transmembrane region" description="Helical" evidence="1">
    <location>
        <begin position="104"/>
        <end position="124"/>
    </location>
</feature>
<feature type="transmembrane region" description="Helical" evidence="1">
    <location>
        <begin position="156"/>
        <end position="176"/>
    </location>
</feature>
<feature type="transmembrane region" description="Helical" evidence="1">
    <location>
        <begin position="201"/>
        <end position="221"/>
    </location>
</feature>
<feature type="transmembrane region" description="Helical" evidence="1">
    <location>
        <begin position="231"/>
        <end position="253"/>
    </location>
</feature>
<feature type="transmembrane region" description="Helical" evidence="1">
    <location>
        <begin position="260"/>
        <end position="280"/>
    </location>
</feature>
<feature type="domain" description="ABC transmembrane type-1" evidence="1">
    <location>
        <begin position="70"/>
        <end position="281"/>
    </location>
</feature>
<feature type="sequence conflict" description="In Ref. 1; AAA26935." evidence="2" ref="1">
    <original>T</original>
    <variation>I</variation>
    <location>
        <position position="40"/>
    </location>
</feature>
<feature type="sequence conflict" description="In Ref. 1; AAA26935." evidence="2" ref="1">
    <original>L</original>
    <variation>S</variation>
    <location>
        <position position="76"/>
    </location>
</feature>
<gene>
    <name type="primary">msmF</name>
    <name type="ordered locus">SMU_879</name>
</gene>
<name>MSMF_STRMU</name>
<keyword id="KW-1003">Cell membrane</keyword>
<keyword id="KW-0472">Membrane</keyword>
<keyword id="KW-1185">Reference proteome</keyword>
<keyword id="KW-0762">Sugar transport</keyword>
<keyword id="KW-0812">Transmembrane</keyword>
<keyword id="KW-1133">Transmembrane helix</keyword>
<keyword id="KW-0813">Transport</keyword>
<organism>
    <name type="scientific">Streptococcus mutans serotype c (strain ATCC 700610 / UA159)</name>
    <dbReference type="NCBI Taxonomy" id="210007"/>
    <lineage>
        <taxon>Bacteria</taxon>
        <taxon>Bacillati</taxon>
        <taxon>Bacillota</taxon>
        <taxon>Bacilli</taxon>
        <taxon>Lactobacillales</taxon>
        <taxon>Streptococcaceae</taxon>
        <taxon>Streptococcus</taxon>
    </lineage>
</organism>
<proteinExistence type="inferred from homology"/>
<protein>
    <recommendedName>
        <fullName>Multiple sugar-binding transport system permease protein MsmF</fullName>
    </recommendedName>
</protein>
<reference key="1">
    <citation type="journal article" date="1992" name="J. Biol. Chem.">
        <title>A binding protein-dependent transport system in Streptococcus mutans responsible for multiple sugar metabolism.</title>
        <authorList>
            <person name="Russell R.R.B."/>
            <person name="Aduse-Opoku J."/>
            <person name="Sutcliffe I.C."/>
            <person name="Tao L."/>
            <person name="Ferretti J.J."/>
        </authorList>
    </citation>
    <scope>NUCLEOTIDE SEQUENCE [GENOMIC DNA]</scope>
    <source>
        <strain>Ingbritt</strain>
    </source>
</reference>
<reference key="2">
    <citation type="journal article" date="2002" name="Proc. Natl. Acad. Sci. U.S.A.">
        <title>Genome sequence of Streptococcus mutans UA159, a cariogenic dental pathogen.</title>
        <authorList>
            <person name="Ajdic D.J."/>
            <person name="McShan W.M."/>
            <person name="McLaughlin R.E."/>
            <person name="Savic G."/>
            <person name="Chang J."/>
            <person name="Carson M.B."/>
            <person name="Primeaux C."/>
            <person name="Tian R."/>
            <person name="Kenton S."/>
            <person name="Jia H.G."/>
            <person name="Lin S.P."/>
            <person name="Qian Y."/>
            <person name="Li S."/>
            <person name="Zhu H."/>
            <person name="Najar F.Z."/>
            <person name="Lai H."/>
            <person name="White J."/>
            <person name="Roe B.A."/>
            <person name="Ferretti J.J."/>
        </authorList>
    </citation>
    <scope>NUCLEOTIDE SEQUENCE [LARGE SCALE GENOMIC DNA]</scope>
    <source>
        <strain>ATCC 700610 / UA159</strain>
    </source>
</reference>
<evidence type="ECO:0000255" key="1">
    <source>
        <dbReference type="PROSITE-ProRule" id="PRU00441"/>
    </source>
</evidence>
<evidence type="ECO:0000305" key="2"/>
<accession>Q00750</accession>